<reference key="1">
    <citation type="journal article" date="1999" name="J. Biol. Chem.">
        <title>Presence of a structurally novel type ribulose-bisphosphate carboxylase/oxygenase in the hyperthermophilic archaeon, Pyrococcus kodakaraensis KOD1.</title>
        <authorList>
            <person name="Ezaki S."/>
            <person name="Maeda N."/>
            <person name="Kishimoto T."/>
            <person name="Atomi H."/>
            <person name="Imanaka T."/>
        </authorList>
    </citation>
    <scope>NUCLEOTIDE SEQUENCE [GENOMIC DNA]</scope>
    <scope>PROTEIN SEQUENCE OF 2-12</scope>
    <scope>FUNCTION</scope>
    <scope>CATALYTIC ACTIVITY</scope>
    <scope>BIOPHYSICOCHEMICAL PROPERTIES</scope>
    <scope>SUBUNIT</scope>
    <source>
        <strain>ATCC BAA-918 / JCM 12380 / KOD1</strain>
    </source>
</reference>
<reference key="2">
    <citation type="journal article" date="2005" name="Genome Res.">
        <title>Complete genome sequence of the hyperthermophilic archaeon Thermococcus kodakaraensis KOD1 and comparison with Pyrococcus genomes.</title>
        <authorList>
            <person name="Fukui T."/>
            <person name="Atomi H."/>
            <person name="Kanai T."/>
            <person name="Matsumi R."/>
            <person name="Fujiwara S."/>
            <person name="Imanaka T."/>
        </authorList>
    </citation>
    <scope>NUCLEOTIDE SEQUENCE [LARGE SCALE GENOMIC DNA]</scope>
    <source>
        <strain>ATCC BAA-918 / JCM 12380 / KOD1</strain>
    </source>
</reference>
<reference key="3">
    <citation type="journal article" date="1999" name="J. Mol. Biol.">
        <title>Ribulose bisphosphate carboxylase/oxygenase from the hyperthermophilic archaeon Pyrococcus kodakaraensis KOD1 is composed solely of large subunits and forms a pentagonal structure.</title>
        <authorList>
            <person name="Maeda N."/>
            <person name="Kitano K."/>
            <person name="Fukui T."/>
            <person name="Ezaki S."/>
            <person name="Atomi H."/>
            <person name="Miki K."/>
            <person name="Imanaka T."/>
        </authorList>
    </citation>
    <scope>PROTEIN SEQUENCE OF 2-12</scope>
    <scope>FUNCTION</scope>
    <scope>SUBUNIT</scope>
    <scope>CRYSTALLIZATION</scope>
    <source>
        <strain>ATCC BAA-918 / JCM 12380 / KOD1</strain>
    </source>
</reference>
<reference key="4">
    <citation type="journal article" date="2002" name="J. Biol. Chem.">
        <title>The unique pentagonal structure of an archaeal Rubisco is essential for its high thermostability.</title>
        <authorList>
            <person name="Maeda N."/>
            <person name="Kanai T."/>
            <person name="Atomi H."/>
            <person name="Imanaka T."/>
        </authorList>
    </citation>
    <scope>FUNCTION</scope>
    <scope>SUBUNIT</scope>
    <scope>MUTAGENESIS OF GLU-63; ARG-66 AND ASP-69</scope>
    <source>
        <strain>ATCC BAA-918 / JCM 12380 / KOD1</strain>
    </source>
</reference>
<reference key="5">
    <citation type="journal article" date="2007" name="Science">
        <title>Archaeal type III RuBisCOs function in a pathway for AMP metabolism.</title>
        <authorList>
            <person name="Sato T."/>
            <person name="Atomi H."/>
            <person name="Imanaka T."/>
        </authorList>
    </citation>
    <scope>FUNCTION</scope>
    <scope>CATALYTIC ACTIVITY</scope>
    <scope>DISRUPTION PHENOTYPE</scope>
    <scope>PATHWAY</scope>
    <source>
        <strain>ATCC BAA-918 / JCM 12380 / KOD1</strain>
    </source>
</reference>
<reference key="6">
    <citation type="journal article" date="2012" name="J. Bacteriol.">
        <title>Enzymatic characterization of AMP phosphorylase and ribose-1,5-bisphosphate isomerase functioning in an archaeal AMP metabolic pathway.</title>
        <authorList>
            <person name="Aono R."/>
            <person name="Sato T."/>
            <person name="Yano A."/>
            <person name="Yoshida S."/>
            <person name="Nishitani Y."/>
            <person name="Miki K."/>
            <person name="Imanaka T."/>
            <person name="Atomi H."/>
        </authorList>
    </citation>
    <scope>INDUCTION</scope>
    <scope>PATHWAY</scope>
    <source>
        <strain>ATCC BAA-918 / JCM 12380 / KOD1</strain>
    </source>
</reference>
<reference key="7">
    <citation type="journal article" date="2001" name="Structure">
        <title>Crystal structure of a novel-type archaeal rubisco with pentagonal symmetry.</title>
        <authorList>
            <person name="Kitano K."/>
            <person name="Maeda N."/>
            <person name="Fukui T."/>
            <person name="Atomi H."/>
            <person name="Imanaka T."/>
            <person name="Miki K."/>
        </authorList>
    </citation>
    <scope>X-RAY CRYSTALLOGRAPHY (2.8 ANGSTROMS)</scope>
    <scope>COFACTOR</scope>
    <scope>SUBUNIT</scope>
    <source>
        <strain>ATCC BAA-918 / JCM 12380 / KOD1</strain>
    </source>
</reference>
<reference key="8">
    <citation type="journal article" date="2010" name="J. Biol. Chem.">
        <title>Structure-based catalytic optimization of a type III Rubisco from a hyperthermophile.</title>
        <authorList>
            <person name="Nishitani Y."/>
            <person name="Yoshida S."/>
            <person name="Fujihashi M."/>
            <person name="Kitagawa K."/>
            <person name="Doi T."/>
            <person name="Atomi H."/>
            <person name="Imanaka T."/>
            <person name="Miki K."/>
        </authorList>
    </citation>
    <scope>X-RAY CRYSTALLOGRAPHY (2.09 ANGSTROMS) OF WILD-TYPE AND MUTANTS IN COMPLEX WITH INHIBITOR AND MAGNESIUM</scope>
    <scope>FUNCTION</scope>
    <scope>COFACTOR</scope>
    <scope>TEMPERATURE DEPENDENCE</scope>
    <scope>CARBOXYLATION AT LYS-189</scope>
    <source>
        <strain>ATCC BAA-918 / JCM 12380 / KOD1</strain>
    </source>
</reference>
<name>RBL_THEKO</name>
<sequence length="444" mass="49713">MVEKFDTIYDYYVDKGYEPSKKRDIIAVFRVTPAEGYTIEQAAGAVAAESSTGTWTTLYPWYEQERWADLSAKAYDFHDMGDGSWIVRIAYPFHAFEEANLPGLLASIAGNIFGMKRVKGLRLEDLYFPEKLIREFDGPAFGIEGVRKMLEIKDRPIYGVVPKPKVGYSPEEFEKLAYDLLSNGADYMKDDENLTSPWYNRFEERAEIMAKIIDKVENETGEKKTWFANITADLLEMEQRLEVLADLGLKHAMVDVVITGWGALRYIRDLAADYGLAIHGHRAMHAAFTRNPYHGISMFVLAKLYRLIGIDQLHVGTAGAGKLEGGKWDVIQNARILRESHYKPDENDVFHLEQKFYSIKAAFPTSSGGLHPGNIQPVIEALGTDIVLQLGGGTLGHPDGPAAGARAVRQAIDAIMQGIPLDEYAKTHKELARALEKWGHVTPV</sequence>
<comment type="function">
    <text evidence="1 2 4 5 6 8">Catalyzes the addition of molecular CO(2) and H(2)O to ribulose 1,5-bisphosphate (RuBP), generating two molecules of 3-phosphoglycerate (3-PGA) (PubMed:10512715, PubMed:9988755). Functions in an archaeal AMP degradation pathway, together with AMP phosphorylase and R15P isomerase (PubMed:17303759).</text>
</comment>
<comment type="catalytic activity">
    <reaction evidence="1 8">
        <text>2 (2R)-3-phosphoglycerate + 2 H(+) = D-ribulose 1,5-bisphosphate + CO2 + H2O</text>
        <dbReference type="Rhea" id="RHEA:23124"/>
        <dbReference type="ChEBI" id="CHEBI:15377"/>
        <dbReference type="ChEBI" id="CHEBI:15378"/>
        <dbReference type="ChEBI" id="CHEBI:16526"/>
        <dbReference type="ChEBI" id="CHEBI:57870"/>
        <dbReference type="ChEBI" id="CHEBI:58272"/>
        <dbReference type="EC" id="4.1.1.39"/>
    </reaction>
</comment>
<comment type="catalytic activity">
    <reaction evidence="1 8">
        <text>D-ribulose 1,5-bisphosphate + O2 = 2-phosphoglycolate + (2R)-3-phosphoglycerate + 2 H(+)</text>
        <dbReference type="Rhea" id="RHEA:36631"/>
        <dbReference type="ChEBI" id="CHEBI:15378"/>
        <dbReference type="ChEBI" id="CHEBI:15379"/>
        <dbReference type="ChEBI" id="CHEBI:57870"/>
        <dbReference type="ChEBI" id="CHEBI:58033"/>
        <dbReference type="ChEBI" id="CHEBI:58272"/>
    </reaction>
</comment>
<comment type="cofactor">
    <cofactor evidence="1 3 6">
        <name>Mg(2+)</name>
        <dbReference type="ChEBI" id="CHEBI:18420"/>
    </cofactor>
    <text evidence="1 3 6">Binds 1 Mg(2+) ion per subunit.</text>
</comment>
<comment type="biophysicochemical properties">
    <temperatureDependence>
        <text evidence="6 8">Optimum temperature is 90 degrees Celsius (PubMed:9988755). Highly thermostable, has a half-life of 220 minutes at 90 degrees Celsius (PubMed:9988755).</text>
    </temperatureDependence>
</comment>
<comment type="subunit">
    <text evidence="2 3 4 6 11">Homodecamer, consisting of five dimer units which form a ring-like pentagonal structure. This arrangement is essential for its high thermostability (PubMed:12070156). In contrast to form I RuBisCO, the form III RuBisCO is composed solely of large subunits (PubMed:9988755).</text>
</comment>
<comment type="induction">
    <text evidence="7">Up-regulated by nucleosides (at protein level).</text>
</comment>
<comment type="disruption phenotype">
    <text evidence="5">Cells lacking this gene show a slight decrease in growth as compared to the wild-type when they are grown in nutrient-rich medium.</text>
</comment>
<comment type="miscellaneous">
    <text evidence="10">Because the Archaea possessing a type III RuBisCO are all anaerobic, it is most likely that only the carboxylase activity of RuBisCO, and not the competitive oxygenase activity (by which RuBP reacts with O(2) to form one molecule of 3-phosphoglycerate and one molecule of 2-phosphoglycolate), is biologically relevant in these strains.</text>
</comment>
<comment type="similarity">
    <text evidence="1">Belongs to the RuBisCO large chain family. Type III subfamily.</text>
</comment>
<keyword id="KW-0002">3D-structure</keyword>
<keyword id="KW-0120">Carbon dioxide fixation</keyword>
<keyword id="KW-0903">Direct protein sequencing</keyword>
<keyword id="KW-0456">Lyase</keyword>
<keyword id="KW-0460">Magnesium</keyword>
<keyword id="KW-0479">Metal-binding</keyword>
<keyword id="KW-0560">Oxidoreductase</keyword>
<keyword id="KW-1185">Reference proteome</keyword>
<protein>
    <recommendedName>
        <fullName evidence="1">Ribulose bisphosphate carboxylase</fullName>
        <shortName evidence="1">RuBisCO</shortName>
        <ecNumber evidence="1 8">4.1.1.39</ecNumber>
    </recommendedName>
</protein>
<accession>O93627</accession>
<dbReference type="EC" id="4.1.1.39" evidence="1 8"/>
<dbReference type="EMBL" id="AB018555">
    <property type="protein sequence ID" value="BAA33863.1"/>
    <property type="molecule type" value="Genomic_DNA"/>
</dbReference>
<dbReference type="EMBL" id="AP006878">
    <property type="protein sequence ID" value="BAD86479.1"/>
    <property type="molecule type" value="Genomic_DNA"/>
</dbReference>
<dbReference type="RefSeq" id="WP_011251240.1">
    <property type="nucleotide sequence ID" value="NC_006624.1"/>
</dbReference>
<dbReference type="PDB" id="1GEH">
    <property type="method" value="X-ray"/>
    <property type="resolution" value="2.80 A"/>
    <property type="chains" value="A/B/C/D/E=1-444"/>
</dbReference>
<dbReference type="PDB" id="3A12">
    <property type="method" value="X-ray"/>
    <property type="resolution" value="2.30 A"/>
    <property type="chains" value="A/B/C/D/E/F/G/H/I/J=1-444"/>
</dbReference>
<dbReference type="PDB" id="3A13">
    <property type="method" value="X-ray"/>
    <property type="resolution" value="2.34 A"/>
    <property type="chains" value="A/B/C/D/E/F/G/H/I/J=1-444"/>
</dbReference>
<dbReference type="PDB" id="3KDN">
    <property type="method" value="X-ray"/>
    <property type="resolution" value="2.09 A"/>
    <property type="chains" value="A/B/C/D/E/F/G/H/I/J=1-444"/>
</dbReference>
<dbReference type="PDB" id="3KDO">
    <property type="method" value="X-ray"/>
    <property type="resolution" value="2.36 A"/>
    <property type="chains" value="A/B/C/D/E/F/G/H/I/J=1-444"/>
</dbReference>
<dbReference type="PDB" id="3WQP">
    <property type="method" value="X-ray"/>
    <property type="resolution" value="2.25 A"/>
    <property type="chains" value="A/B/C/D/E/F/G/H/I/J=1-444"/>
</dbReference>
<dbReference type="PDBsum" id="1GEH"/>
<dbReference type="PDBsum" id="3A12"/>
<dbReference type="PDBsum" id="3A13"/>
<dbReference type="PDBsum" id="3KDN"/>
<dbReference type="PDBsum" id="3KDO"/>
<dbReference type="PDBsum" id="3WQP"/>
<dbReference type="SMR" id="O93627"/>
<dbReference type="FunCoup" id="O93627">
    <property type="interactions" value="41"/>
</dbReference>
<dbReference type="IntAct" id="O93627">
    <property type="interactions" value="1"/>
</dbReference>
<dbReference type="MINT" id="O93627"/>
<dbReference type="STRING" id="69014.TK2290"/>
<dbReference type="EnsemblBacteria" id="BAD86479">
    <property type="protein sequence ID" value="BAD86479"/>
    <property type="gene ID" value="TK2290"/>
</dbReference>
<dbReference type="GeneID" id="78448835"/>
<dbReference type="KEGG" id="tko:TK2290"/>
<dbReference type="PATRIC" id="fig|69014.16.peg.2245"/>
<dbReference type="eggNOG" id="arCOG04443">
    <property type="taxonomic scope" value="Archaea"/>
</dbReference>
<dbReference type="HOGENOM" id="CLU_031450_3_1_2"/>
<dbReference type="InParanoid" id="O93627"/>
<dbReference type="OrthoDB" id="52787at2157"/>
<dbReference type="PhylomeDB" id="O93627"/>
<dbReference type="BioCyc" id="MetaCyc:MONOMER-13272"/>
<dbReference type="BRENDA" id="4.1.1.39">
    <property type="organism ID" value="5246"/>
</dbReference>
<dbReference type="EvolutionaryTrace" id="O93627"/>
<dbReference type="Proteomes" id="UP000000536">
    <property type="component" value="Chromosome"/>
</dbReference>
<dbReference type="GO" id="GO:0000287">
    <property type="term" value="F:magnesium ion binding"/>
    <property type="evidence" value="ECO:0007669"/>
    <property type="project" value="UniProtKB-UniRule"/>
</dbReference>
<dbReference type="GO" id="GO:0016491">
    <property type="term" value="F:oxidoreductase activity"/>
    <property type="evidence" value="ECO:0007669"/>
    <property type="project" value="UniProtKB-KW"/>
</dbReference>
<dbReference type="GO" id="GO:0016984">
    <property type="term" value="F:ribulose-bisphosphate carboxylase activity"/>
    <property type="evidence" value="ECO:0007669"/>
    <property type="project" value="UniProtKB-UniRule"/>
</dbReference>
<dbReference type="GO" id="GO:0006196">
    <property type="term" value="P:AMP catabolic process"/>
    <property type="evidence" value="ECO:0007669"/>
    <property type="project" value="UniProtKB-UniRule"/>
</dbReference>
<dbReference type="GO" id="GO:0015977">
    <property type="term" value="P:carbon fixation"/>
    <property type="evidence" value="ECO:0007669"/>
    <property type="project" value="UniProtKB-KW"/>
</dbReference>
<dbReference type="CDD" id="cd08213">
    <property type="entry name" value="RuBisCO_large_III"/>
    <property type="match status" value="1"/>
</dbReference>
<dbReference type="Gene3D" id="3.20.20.110">
    <property type="entry name" value="Ribulose bisphosphate carboxylase, large subunit, C-terminal domain"/>
    <property type="match status" value="1"/>
</dbReference>
<dbReference type="Gene3D" id="3.30.70.150">
    <property type="entry name" value="RuBisCO large subunit, N-terminal domain"/>
    <property type="match status" value="1"/>
</dbReference>
<dbReference type="HAMAP" id="MF_01133">
    <property type="entry name" value="RuBisCO_L_type3"/>
    <property type="match status" value="1"/>
</dbReference>
<dbReference type="InterPro" id="IPR033966">
    <property type="entry name" value="RuBisCO"/>
</dbReference>
<dbReference type="InterPro" id="IPR017712">
    <property type="entry name" value="RuBisCO_III"/>
</dbReference>
<dbReference type="InterPro" id="IPR000685">
    <property type="entry name" value="RuBisCO_lsu_C"/>
</dbReference>
<dbReference type="InterPro" id="IPR036376">
    <property type="entry name" value="RuBisCO_lsu_C_sf"/>
</dbReference>
<dbReference type="InterPro" id="IPR017443">
    <property type="entry name" value="RuBisCO_lsu_fd_N"/>
</dbReference>
<dbReference type="InterPro" id="IPR036422">
    <property type="entry name" value="RuBisCO_lsu_N_sf"/>
</dbReference>
<dbReference type="NCBIfam" id="NF003252">
    <property type="entry name" value="PRK04208.1"/>
    <property type="match status" value="1"/>
</dbReference>
<dbReference type="NCBIfam" id="TIGR03326">
    <property type="entry name" value="rubisco_III"/>
    <property type="match status" value="1"/>
</dbReference>
<dbReference type="PANTHER" id="PTHR42704">
    <property type="entry name" value="RIBULOSE BISPHOSPHATE CARBOXYLASE"/>
    <property type="match status" value="1"/>
</dbReference>
<dbReference type="PANTHER" id="PTHR42704:SF17">
    <property type="entry name" value="RIBULOSE BISPHOSPHATE CARBOXYLASE LARGE CHAIN"/>
    <property type="match status" value="1"/>
</dbReference>
<dbReference type="Pfam" id="PF00016">
    <property type="entry name" value="RuBisCO_large"/>
    <property type="match status" value="1"/>
</dbReference>
<dbReference type="Pfam" id="PF02788">
    <property type="entry name" value="RuBisCO_large_N"/>
    <property type="match status" value="1"/>
</dbReference>
<dbReference type="SFLD" id="SFLDG01052">
    <property type="entry name" value="RuBisCO"/>
    <property type="match status" value="1"/>
</dbReference>
<dbReference type="SFLD" id="SFLDS00014">
    <property type="entry name" value="RuBisCO"/>
    <property type="match status" value="2"/>
</dbReference>
<dbReference type="SFLD" id="SFLDG00301">
    <property type="entry name" value="RuBisCO-like_proteins"/>
    <property type="match status" value="1"/>
</dbReference>
<dbReference type="SUPFAM" id="SSF51649">
    <property type="entry name" value="RuBisCo, C-terminal domain"/>
    <property type="match status" value="1"/>
</dbReference>
<dbReference type="SUPFAM" id="SSF54966">
    <property type="entry name" value="RuBisCO, large subunit, small (N-terminal) domain"/>
    <property type="match status" value="1"/>
</dbReference>
<feature type="initiator methionine" description="Removed" evidence="2 8">
    <location>
        <position position="1"/>
    </location>
</feature>
<feature type="chain" id="PRO_0000062678" description="Ribulose bisphosphate carboxylase">
    <location>
        <begin position="2"/>
        <end position="444"/>
    </location>
</feature>
<feature type="active site" description="Proton acceptor" evidence="1">
    <location>
        <position position="163"/>
    </location>
</feature>
<feature type="active site" description="Proton acceptor" evidence="1">
    <location>
        <position position="281"/>
    </location>
</feature>
<feature type="binding site" evidence="9">
    <location>
        <position position="165"/>
    </location>
    <ligand>
        <name>substrate</name>
    </ligand>
</feature>
<feature type="binding site" description="via carbamate group" evidence="1 6">
    <location>
        <position position="189"/>
    </location>
    <ligand>
        <name>Mg(2+)</name>
        <dbReference type="ChEBI" id="CHEBI:18420"/>
    </ligand>
</feature>
<feature type="binding site" evidence="1 6">
    <location>
        <position position="191"/>
    </location>
    <ligand>
        <name>Mg(2+)</name>
        <dbReference type="ChEBI" id="CHEBI:18420"/>
    </ligand>
</feature>
<feature type="binding site" evidence="1 6">
    <location>
        <position position="192"/>
    </location>
    <ligand>
        <name>Mg(2+)</name>
        <dbReference type="ChEBI" id="CHEBI:18420"/>
    </ligand>
</feature>
<feature type="binding site" evidence="9">
    <location>
        <position position="282"/>
    </location>
    <ligand>
        <name>substrate</name>
    </ligand>
</feature>
<feature type="binding site" evidence="9">
    <location>
        <position position="314"/>
    </location>
    <ligand>
        <name>substrate</name>
    </ligand>
</feature>
<feature type="binding site" evidence="9">
    <location>
        <begin position="367"/>
        <end position="369"/>
    </location>
    <ligand>
        <name>substrate</name>
    </ligand>
</feature>
<feature type="binding site" evidence="9">
    <location>
        <begin position="389"/>
        <end position="392"/>
    </location>
    <ligand>
        <name>substrate</name>
    </ligand>
</feature>
<feature type="site" description="Transition state stabilizer" evidence="1">
    <location>
        <position position="322"/>
    </location>
</feature>
<feature type="modified residue" description="N6-carboxylysine" evidence="1 6">
    <location>
        <position position="189"/>
    </location>
</feature>
<feature type="mutagenesis site" description="Decrease in activity and in thermostability. Large decrease in activity; forms dimers; when associated with S-66 and S-69." evidence="4">
    <original>E</original>
    <variation>S</variation>
    <location>
        <position position="63"/>
    </location>
</feature>
<feature type="mutagenesis site" description="Large decrease in activity and in thermostability. Large decrease in activity; forms dimers; when associated with S-63 and S-69." evidence="4">
    <original>R</original>
    <variation>S</variation>
    <location>
        <position position="66"/>
    </location>
</feature>
<feature type="mutagenesis site" description="Slight decrease in activity; no change in thermostability. Large decrease in activity; forms dimers; when associated with S-63 and S-66." evidence="4">
    <original>D</original>
    <variation>S</variation>
    <location>
        <position position="69"/>
    </location>
</feature>
<feature type="helix" evidence="12">
    <location>
        <begin position="10"/>
        <end position="12"/>
    </location>
</feature>
<feature type="turn" evidence="12">
    <location>
        <begin position="21"/>
        <end position="23"/>
    </location>
</feature>
<feature type="strand" evidence="12">
    <location>
        <begin position="24"/>
        <end position="33"/>
    </location>
</feature>
<feature type="helix" evidence="12">
    <location>
        <begin position="39"/>
        <end position="49"/>
    </location>
</feature>
<feature type="turn" evidence="12">
    <location>
        <begin position="50"/>
        <end position="52"/>
    </location>
</feature>
<feature type="helix" evidence="12">
    <location>
        <begin position="64"/>
        <end position="70"/>
    </location>
</feature>
<feature type="strand" evidence="12">
    <location>
        <begin position="73"/>
        <end position="79"/>
    </location>
</feature>
<feature type="strand" evidence="12">
    <location>
        <begin position="81"/>
        <end position="83"/>
    </location>
</feature>
<feature type="strand" evidence="12">
    <location>
        <begin position="85"/>
        <end position="92"/>
    </location>
</feature>
<feature type="helix" evidence="12">
    <location>
        <begin position="93"/>
        <end position="95"/>
    </location>
</feature>
<feature type="helix" evidence="12">
    <location>
        <begin position="101"/>
        <end position="108"/>
    </location>
</feature>
<feature type="helix" evidence="12">
    <location>
        <begin position="111"/>
        <end position="114"/>
    </location>
</feature>
<feature type="strand" evidence="12">
    <location>
        <begin position="118"/>
        <end position="127"/>
    </location>
</feature>
<feature type="helix" evidence="12">
    <location>
        <begin position="130"/>
        <end position="133"/>
    </location>
</feature>
<feature type="helix" evidence="12">
    <location>
        <begin position="142"/>
        <end position="150"/>
    </location>
</feature>
<feature type="strand" evidence="12">
    <location>
        <begin position="157"/>
        <end position="160"/>
    </location>
</feature>
<feature type="strand" evidence="12">
    <location>
        <begin position="163"/>
        <end position="166"/>
    </location>
</feature>
<feature type="helix" evidence="12">
    <location>
        <begin position="170"/>
        <end position="182"/>
    </location>
</feature>
<feature type="strand" evidence="12">
    <location>
        <begin position="187"/>
        <end position="189"/>
    </location>
</feature>
<feature type="helix" evidence="12">
    <location>
        <begin position="202"/>
        <end position="220"/>
    </location>
</feature>
<feature type="strand" evidence="12">
    <location>
        <begin position="225"/>
        <end position="229"/>
    </location>
</feature>
<feature type="helix" evidence="12">
    <location>
        <begin position="234"/>
        <end position="247"/>
    </location>
</feature>
<feature type="strand" evidence="12">
    <location>
        <begin position="251"/>
        <end position="255"/>
    </location>
</feature>
<feature type="helix" evidence="12">
    <location>
        <begin position="256"/>
        <end position="259"/>
    </location>
</feature>
<feature type="helix" evidence="12">
    <location>
        <begin position="261"/>
        <end position="274"/>
    </location>
</feature>
<feature type="strand" evidence="12">
    <location>
        <begin position="277"/>
        <end position="281"/>
    </location>
</feature>
<feature type="turn" evidence="12">
    <location>
        <begin position="283"/>
        <end position="285"/>
    </location>
</feature>
<feature type="helix" evidence="12">
    <location>
        <begin position="286"/>
        <end position="289"/>
    </location>
</feature>
<feature type="strand" evidence="12">
    <location>
        <begin position="294"/>
        <end position="296"/>
    </location>
</feature>
<feature type="helix" evidence="12">
    <location>
        <begin position="298"/>
        <end position="308"/>
    </location>
</feature>
<feature type="strand" evidence="12">
    <location>
        <begin position="311"/>
        <end position="314"/>
    </location>
</feature>
<feature type="strand" evidence="12">
    <location>
        <begin position="320"/>
        <end position="323"/>
    </location>
</feature>
<feature type="helix" evidence="12">
    <location>
        <begin position="327"/>
        <end position="338"/>
    </location>
</feature>
<feature type="strand" evidence="12">
    <location>
        <begin position="340"/>
        <end position="342"/>
    </location>
</feature>
<feature type="strand" evidence="12">
    <location>
        <begin position="363"/>
        <end position="369"/>
    </location>
</feature>
<feature type="turn" evidence="13">
    <location>
        <begin position="372"/>
        <end position="374"/>
    </location>
</feature>
<feature type="helix" evidence="12">
    <location>
        <begin position="376"/>
        <end position="382"/>
    </location>
</feature>
<feature type="strand" evidence="12">
    <location>
        <begin position="384"/>
        <end position="389"/>
    </location>
</feature>
<feature type="helix" evidence="12">
    <location>
        <begin position="392"/>
        <end position="395"/>
    </location>
</feature>
<feature type="helix" evidence="12">
    <location>
        <begin position="401"/>
        <end position="415"/>
    </location>
</feature>
<feature type="helix" evidence="12">
    <location>
        <begin position="421"/>
        <end position="425"/>
    </location>
</feature>
<feature type="helix" evidence="12">
    <location>
        <begin position="429"/>
        <end position="438"/>
    </location>
</feature>
<gene>
    <name evidence="1" type="primary">rbcL</name>
    <name type="synonym">rbc</name>
    <name type="ordered locus">TK2290</name>
</gene>
<organism>
    <name type="scientific">Thermococcus kodakarensis (strain ATCC BAA-918 / JCM 12380 / KOD1)</name>
    <name type="common">Pyrococcus kodakaraensis (strain KOD1)</name>
    <dbReference type="NCBI Taxonomy" id="69014"/>
    <lineage>
        <taxon>Archaea</taxon>
        <taxon>Methanobacteriati</taxon>
        <taxon>Methanobacteriota</taxon>
        <taxon>Thermococci</taxon>
        <taxon>Thermococcales</taxon>
        <taxon>Thermococcaceae</taxon>
        <taxon>Thermococcus</taxon>
    </lineage>
</organism>
<evidence type="ECO:0000255" key="1">
    <source>
        <dbReference type="HAMAP-Rule" id="MF_01133"/>
    </source>
</evidence>
<evidence type="ECO:0000269" key="2">
    <source>
    </source>
</evidence>
<evidence type="ECO:0000269" key="3">
    <source>
    </source>
</evidence>
<evidence type="ECO:0000269" key="4">
    <source>
    </source>
</evidence>
<evidence type="ECO:0000269" key="5">
    <source>
    </source>
</evidence>
<evidence type="ECO:0000269" key="6">
    <source>
    </source>
</evidence>
<evidence type="ECO:0000269" key="7">
    <source>
    </source>
</evidence>
<evidence type="ECO:0000269" key="8">
    <source>
    </source>
</evidence>
<evidence type="ECO:0000305" key="9"/>
<evidence type="ECO:0000305" key="10">
    <source>
    </source>
</evidence>
<evidence type="ECO:0000305" key="11">
    <source>
    </source>
</evidence>
<evidence type="ECO:0007829" key="12">
    <source>
        <dbReference type="PDB" id="3KDN"/>
    </source>
</evidence>
<evidence type="ECO:0007829" key="13">
    <source>
        <dbReference type="PDB" id="3WQP"/>
    </source>
</evidence>
<proteinExistence type="evidence at protein level"/>